<evidence type="ECO:0000250" key="1"/>
<evidence type="ECO:0000250" key="2">
    <source>
        <dbReference type="UniProtKB" id="P00157"/>
    </source>
</evidence>
<evidence type="ECO:0000255" key="3">
    <source>
        <dbReference type="PROSITE-ProRule" id="PRU00967"/>
    </source>
</evidence>
<evidence type="ECO:0000255" key="4">
    <source>
        <dbReference type="PROSITE-ProRule" id="PRU00968"/>
    </source>
</evidence>
<organism>
    <name type="scientific">Myotis emarginatus</name>
    <name type="common">Geoffroy's bat</name>
    <dbReference type="NCBI Taxonomy" id="109480"/>
    <lineage>
        <taxon>Eukaryota</taxon>
        <taxon>Metazoa</taxon>
        <taxon>Chordata</taxon>
        <taxon>Craniata</taxon>
        <taxon>Vertebrata</taxon>
        <taxon>Euteleostomi</taxon>
        <taxon>Mammalia</taxon>
        <taxon>Eutheria</taxon>
        <taxon>Laurasiatheria</taxon>
        <taxon>Chiroptera</taxon>
        <taxon>Yangochiroptera</taxon>
        <taxon>Vespertilionidae</taxon>
        <taxon>Myotis</taxon>
    </lineage>
</organism>
<proteinExistence type="inferred from homology"/>
<reference key="1">
    <citation type="journal article" date="2001" name="Mol. Phylogenet. Evol.">
        <title>Molecular systematics of bats of the genus Myotis (Vespertilionidae) suggests deterministic ecomorphological convergences.</title>
        <authorList>
            <person name="Ruedi M."/>
            <person name="Mayer F."/>
        </authorList>
    </citation>
    <scope>NUCLEOTIDE SEQUENCE [GENOMIC DNA]</scope>
    <source>
        <strain>Isolate ER 99</strain>
    </source>
</reference>
<gene>
    <name type="primary">MT-CYB</name>
    <name type="synonym">COB</name>
    <name type="synonym">CYTB</name>
    <name type="synonym">MTCYB</name>
</gene>
<accession>Q957B3</accession>
<name>CYB_MYOEM</name>
<sequence length="379" mass="42830">MTNIRKSHPLLKIINSSFIDLPAPSNISSWWNFGSLLGICLALQILTGLFLAMHYTSDTATAFNSVTHICRDVNYGWILRYLHANGASMFFICLYLHVGRGLYYGSYMYTETWNVGVLLLFAVMATAFMGYVLPWGQMSFWGATVITNLLSAIPYIGTNLVEWIWGGFSVDKATLTRFFAFHFLLPFIISAMVMVHLLFLHETGSNNPTGIPSNMDMIPLHPYYTIKDILGLLLMITMLLMLVLFSPDMLGDPDNYTPANPLNTPPHIKPEWYFLFAYAILRSIPNKLGGVMALVLSILILIIIPLLHTSKQRSMIFRPLSQCLFWLLVADLLTLTWIGGQPVEHPYVIIGQLASILYFSIIIILMPLTSLVENHLLKW</sequence>
<feature type="chain" id="PRO_0000061236" description="Cytochrome b">
    <location>
        <begin position="1"/>
        <end position="379"/>
    </location>
</feature>
<feature type="transmembrane region" description="Helical" evidence="2">
    <location>
        <begin position="33"/>
        <end position="53"/>
    </location>
</feature>
<feature type="transmembrane region" description="Helical" evidence="2">
    <location>
        <begin position="77"/>
        <end position="98"/>
    </location>
</feature>
<feature type="transmembrane region" description="Helical" evidence="2">
    <location>
        <begin position="113"/>
        <end position="133"/>
    </location>
</feature>
<feature type="transmembrane region" description="Helical" evidence="2">
    <location>
        <begin position="178"/>
        <end position="198"/>
    </location>
</feature>
<feature type="transmembrane region" description="Helical" evidence="2">
    <location>
        <begin position="226"/>
        <end position="246"/>
    </location>
</feature>
<feature type="transmembrane region" description="Helical" evidence="2">
    <location>
        <begin position="288"/>
        <end position="308"/>
    </location>
</feature>
<feature type="transmembrane region" description="Helical" evidence="2">
    <location>
        <begin position="320"/>
        <end position="340"/>
    </location>
</feature>
<feature type="transmembrane region" description="Helical" evidence="2">
    <location>
        <begin position="347"/>
        <end position="367"/>
    </location>
</feature>
<feature type="binding site" description="axial binding residue" evidence="2">
    <location>
        <position position="83"/>
    </location>
    <ligand>
        <name>heme b</name>
        <dbReference type="ChEBI" id="CHEBI:60344"/>
        <label>b562</label>
    </ligand>
    <ligandPart>
        <name>Fe</name>
        <dbReference type="ChEBI" id="CHEBI:18248"/>
    </ligandPart>
</feature>
<feature type="binding site" description="axial binding residue" evidence="2">
    <location>
        <position position="97"/>
    </location>
    <ligand>
        <name>heme b</name>
        <dbReference type="ChEBI" id="CHEBI:60344"/>
        <label>b566</label>
    </ligand>
    <ligandPart>
        <name>Fe</name>
        <dbReference type="ChEBI" id="CHEBI:18248"/>
    </ligandPart>
</feature>
<feature type="binding site" description="axial binding residue" evidence="2">
    <location>
        <position position="182"/>
    </location>
    <ligand>
        <name>heme b</name>
        <dbReference type="ChEBI" id="CHEBI:60344"/>
        <label>b562</label>
    </ligand>
    <ligandPart>
        <name>Fe</name>
        <dbReference type="ChEBI" id="CHEBI:18248"/>
    </ligandPart>
</feature>
<feature type="binding site" description="axial binding residue" evidence="2">
    <location>
        <position position="196"/>
    </location>
    <ligand>
        <name>heme b</name>
        <dbReference type="ChEBI" id="CHEBI:60344"/>
        <label>b566</label>
    </ligand>
    <ligandPart>
        <name>Fe</name>
        <dbReference type="ChEBI" id="CHEBI:18248"/>
    </ligandPart>
</feature>
<feature type="binding site" evidence="2">
    <location>
        <position position="201"/>
    </location>
    <ligand>
        <name>a ubiquinone</name>
        <dbReference type="ChEBI" id="CHEBI:16389"/>
    </ligand>
</feature>
<dbReference type="EMBL" id="AF376849">
    <property type="protein sequence ID" value="AAK57668.1"/>
    <property type="molecule type" value="Genomic_DNA"/>
</dbReference>
<dbReference type="SMR" id="Q957B3"/>
<dbReference type="GO" id="GO:0005743">
    <property type="term" value="C:mitochondrial inner membrane"/>
    <property type="evidence" value="ECO:0007669"/>
    <property type="project" value="UniProtKB-SubCell"/>
</dbReference>
<dbReference type="GO" id="GO:0045275">
    <property type="term" value="C:respiratory chain complex III"/>
    <property type="evidence" value="ECO:0007669"/>
    <property type="project" value="InterPro"/>
</dbReference>
<dbReference type="GO" id="GO:0046872">
    <property type="term" value="F:metal ion binding"/>
    <property type="evidence" value="ECO:0007669"/>
    <property type="project" value="UniProtKB-KW"/>
</dbReference>
<dbReference type="GO" id="GO:0008121">
    <property type="term" value="F:ubiquinol-cytochrome-c reductase activity"/>
    <property type="evidence" value="ECO:0007669"/>
    <property type="project" value="InterPro"/>
</dbReference>
<dbReference type="GO" id="GO:0006122">
    <property type="term" value="P:mitochondrial electron transport, ubiquinol to cytochrome c"/>
    <property type="evidence" value="ECO:0007669"/>
    <property type="project" value="TreeGrafter"/>
</dbReference>
<dbReference type="CDD" id="cd00290">
    <property type="entry name" value="cytochrome_b_C"/>
    <property type="match status" value="1"/>
</dbReference>
<dbReference type="CDD" id="cd00284">
    <property type="entry name" value="Cytochrome_b_N"/>
    <property type="match status" value="1"/>
</dbReference>
<dbReference type="FunFam" id="1.20.810.10:FF:000002">
    <property type="entry name" value="Cytochrome b"/>
    <property type="match status" value="1"/>
</dbReference>
<dbReference type="Gene3D" id="1.20.810.10">
    <property type="entry name" value="Cytochrome Bc1 Complex, Chain C"/>
    <property type="match status" value="1"/>
</dbReference>
<dbReference type="InterPro" id="IPR005798">
    <property type="entry name" value="Cyt_b/b6_C"/>
</dbReference>
<dbReference type="InterPro" id="IPR036150">
    <property type="entry name" value="Cyt_b/b6_C_sf"/>
</dbReference>
<dbReference type="InterPro" id="IPR005797">
    <property type="entry name" value="Cyt_b/b6_N"/>
</dbReference>
<dbReference type="InterPro" id="IPR027387">
    <property type="entry name" value="Cytb/b6-like_sf"/>
</dbReference>
<dbReference type="InterPro" id="IPR030689">
    <property type="entry name" value="Cytochrome_b"/>
</dbReference>
<dbReference type="InterPro" id="IPR048260">
    <property type="entry name" value="Cytochrome_b_C_euk/bac"/>
</dbReference>
<dbReference type="InterPro" id="IPR048259">
    <property type="entry name" value="Cytochrome_b_N_euk/bac"/>
</dbReference>
<dbReference type="InterPro" id="IPR016174">
    <property type="entry name" value="Di-haem_cyt_TM"/>
</dbReference>
<dbReference type="PANTHER" id="PTHR19271">
    <property type="entry name" value="CYTOCHROME B"/>
    <property type="match status" value="1"/>
</dbReference>
<dbReference type="PANTHER" id="PTHR19271:SF16">
    <property type="entry name" value="CYTOCHROME B"/>
    <property type="match status" value="1"/>
</dbReference>
<dbReference type="Pfam" id="PF00032">
    <property type="entry name" value="Cytochrom_B_C"/>
    <property type="match status" value="1"/>
</dbReference>
<dbReference type="Pfam" id="PF00033">
    <property type="entry name" value="Cytochrome_B"/>
    <property type="match status" value="1"/>
</dbReference>
<dbReference type="PIRSF" id="PIRSF038885">
    <property type="entry name" value="COB"/>
    <property type="match status" value="1"/>
</dbReference>
<dbReference type="SUPFAM" id="SSF81648">
    <property type="entry name" value="a domain/subunit of cytochrome bc1 complex (Ubiquinol-cytochrome c reductase)"/>
    <property type="match status" value="1"/>
</dbReference>
<dbReference type="SUPFAM" id="SSF81342">
    <property type="entry name" value="Transmembrane di-heme cytochromes"/>
    <property type="match status" value="1"/>
</dbReference>
<dbReference type="PROSITE" id="PS51003">
    <property type="entry name" value="CYTB_CTER"/>
    <property type="match status" value="1"/>
</dbReference>
<dbReference type="PROSITE" id="PS51002">
    <property type="entry name" value="CYTB_NTER"/>
    <property type="match status" value="1"/>
</dbReference>
<comment type="function">
    <text evidence="2">Component of the ubiquinol-cytochrome c reductase complex (complex III or cytochrome b-c1 complex) that is part of the mitochondrial respiratory chain. The b-c1 complex mediates electron transfer from ubiquinol to cytochrome c. Contributes to the generation of a proton gradient across the mitochondrial membrane that is then used for ATP synthesis.</text>
</comment>
<comment type="cofactor">
    <cofactor evidence="2">
        <name>heme b</name>
        <dbReference type="ChEBI" id="CHEBI:60344"/>
    </cofactor>
    <text evidence="2">Binds 2 heme b groups non-covalently.</text>
</comment>
<comment type="subunit">
    <text evidence="2">The cytochrome bc1 complex contains 11 subunits: 3 respiratory subunits (MT-CYB, CYC1 and UQCRFS1), 2 core proteins (UQCRC1 and UQCRC2) and 6 low-molecular weight proteins (UQCRH/QCR6, UQCRB/QCR7, UQCRQ/QCR8, UQCR10/QCR9, UQCR11/QCR10 and a cleavage product of UQCRFS1). This cytochrome bc1 complex then forms a dimer.</text>
</comment>
<comment type="subcellular location">
    <subcellularLocation>
        <location evidence="2">Mitochondrion inner membrane</location>
        <topology evidence="2">Multi-pass membrane protein</topology>
    </subcellularLocation>
</comment>
<comment type="miscellaneous">
    <text evidence="1">Heme 1 (or BL or b562) is low-potential and absorbs at about 562 nm, and heme 2 (or BH or b566) is high-potential and absorbs at about 566 nm.</text>
</comment>
<comment type="similarity">
    <text evidence="3 4">Belongs to the cytochrome b family.</text>
</comment>
<comment type="caution">
    <text evidence="2">The full-length protein contains only eight transmembrane helices, not nine as predicted by bioinformatics tools.</text>
</comment>
<geneLocation type="mitochondrion"/>
<keyword id="KW-0249">Electron transport</keyword>
<keyword id="KW-0349">Heme</keyword>
<keyword id="KW-0408">Iron</keyword>
<keyword id="KW-0472">Membrane</keyword>
<keyword id="KW-0479">Metal-binding</keyword>
<keyword id="KW-0496">Mitochondrion</keyword>
<keyword id="KW-0999">Mitochondrion inner membrane</keyword>
<keyword id="KW-0679">Respiratory chain</keyword>
<keyword id="KW-0812">Transmembrane</keyword>
<keyword id="KW-1133">Transmembrane helix</keyword>
<keyword id="KW-0813">Transport</keyword>
<keyword id="KW-0830">Ubiquinone</keyword>
<protein>
    <recommendedName>
        <fullName>Cytochrome b</fullName>
    </recommendedName>
    <alternativeName>
        <fullName>Complex III subunit 3</fullName>
    </alternativeName>
    <alternativeName>
        <fullName>Complex III subunit III</fullName>
    </alternativeName>
    <alternativeName>
        <fullName>Cytochrome b-c1 complex subunit 3</fullName>
    </alternativeName>
    <alternativeName>
        <fullName>Ubiquinol-cytochrome-c reductase complex cytochrome b subunit</fullName>
    </alternativeName>
</protein>